<comment type="function">
    <text evidence="1">Catalyzes a salvage reaction resulting in the formation of AMP, that is energically less costly than de novo synthesis.</text>
</comment>
<comment type="catalytic activity">
    <reaction evidence="1">
        <text>AMP + diphosphate = 5-phospho-alpha-D-ribose 1-diphosphate + adenine</text>
        <dbReference type="Rhea" id="RHEA:16609"/>
        <dbReference type="ChEBI" id="CHEBI:16708"/>
        <dbReference type="ChEBI" id="CHEBI:33019"/>
        <dbReference type="ChEBI" id="CHEBI:58017"/>
        <dbReference type="ChEBI" id="CHEBI:456215"/>
        <dbReference type="EC" id="2.4.2.7"/>
    </reaction>
</comment>
<comment type="pathway">
    <text evidence="1">Purine metabolism; AMP biosynthesis via salvage pathway; AMP from adenine: step 1/1.</text>
</comment>
<comment type="subunit">
    <text evidence="1">Homodimer.</text>
</comment>
<comment type="subcellular location">
    <subcellularLocation>
        <location evidence="1">Cytoplasm</location>
    </subcellularLocation>
</comment>
<comment type="similarity">
    <text evidence="1">Belongs to the purine/pyrimidine phosphoribosyltransferase family.</text>
</comment>
<protein>
    <recommendedName>
        <fullName evidence="1">Adenine phosphoribosyltransferase</fullName>
        <shortName evidence="1">APRT</shortName>
        <ecNumber evidence="1">2.4.2.7</ecNumber>
    </recommendedName>
</protein>
<gene>
    <name evidence="1" type="primary">apt</name>
    <name type="ordered locus">BbuZS7_0806</name>
</gene>
<evidence type="ECO:0000255" key="1">
    <source>
        <dbReference type="HAMAP-Rule" id="MF_00004"/>
    </source>
</evidence>
<organism>
    <name type="scientific">Borreliella burgdorferi (strain ZS7)</name>
    <name type="common">Borrelia burgdorferi</name>
    <dbReference type="NCBI Taxonomy" id="445985"/>
    <lineage>
        <taxon>Bacteria</taxon>
        <taxon>Pseudomonadati</taxon>
        <taxon>Spirochaetota</taxon>
        <taxon>Spirochaetia</taxon>
        <taxon>Spirochaetales</taxon>
        <taxon>Borreliaceae</taxon>
        <taxon>Borreliella</taxon>
    </lineage>
</organism>
<proteinExistence type="inferred from homology"/>
<sequence length="176" mass="20204">MKNKTEYYDQFISKIPNFPKKGVLFYDITSVLLKPEVYSSLINEVYSFYNFKKIDCIAVVESRGYLIGAPLSLKMQLPLVLIRKEGKLPREVFSEEYELEYGFGRIEVHKDDVRMYSNILLIDDILATGGTLKSSAILLERAGGKVKDIFCFIELCAINGRQSLESYEVNSLVRYN</sequence>
<feature type="chain" id="PRO_1000116167" description="Adenine phosphoribosyltransferase">
    <location>
        <begin position="1"/>
        <end position="176"/>
    </location>
</feature>
<name>APT_BORBZ</name>
<keyword id="KW-0963">Cytoplasm</keyword>
<keyword id="KW-0328">Glycosyltransferase</keyword>
<keyword id="KW-0660">Purine salvage</keyword>
<keyword id="KW-0808">Transferase</keyword>
<reference key="1">
    <citation type="journal article" date="2011" name="J. Bacteriol.">
        <title>Whole-genome sequences of thirteen isolates of Borrelia burgdorferi.</title>
        <authorList>
            <person name="Schutzer S.E."/>
            <person name="Fraser-Liggett C.M."/>
            <person name="Casjens S.R."/>
            <person name="Qiu W.G."/>
            <person name="Dunn J.J."/>
            <person name="Mongodin E.F."/>
            <person name="Luft B.J."/>
        </authorList>
    </citation>
    <scope>NUCLEOTIDE SEQUENCE [LARGE SCALE GENOMIC DNA]</scope>
    <source>
        <strain>ZS7</strain>
    </source>
</reference>
<dbReference type="EC" id="2.4.2.7" evidence="1"/>
<dbReference type="EMBL" id="CP001205">
    <property type="protein sequence ID" value="ACK74678.1"/>
    <property type="molecule type" value="Genomic_DNA"/>
</dbReference>
<dbReference type="RefSeq" id="WP_012597342.1">
    <property type="nucleotide sequence ID" value="NC_011728.1"/>
</dbReference>
<dbReference type="SMR" id="B7J0M3"/>
<dbReference type="KEGG" id="bbz:BbuZS7_0806"/>
<dbReference type="HOGENOM" id="CLU_063339_3_0_12"/>
<dbReference type="UniPathway" id="UPA00588">
    <property type="reaction ID" value="UER00646"/>
</dbReference>
<dbReference type="Proteomes" id="UP000006901">
    <property type="component" value="Chromosome"/>
</dbReference>
<dbReference type="GO" id="GO:0005737">
    <property type="term" value="C:cytoplasm"/>
    <property type="evidence" value="ECO:0007669"/>
    <property type="project" value="UniProtKB-SubCell"/>
</dbReference>
<dbReference type="GO" id="GO:0002055">
    <property type="term" value="F:adenine binding"/>
    <property type="evidence" value="ECO:0007669"/>
    <property type="project" value="TreeGrafter"/>
</dbReference>
<dbReference type="GO" id="GO:0003999">
    <property type="term" value="F:adenine phosphoribosyltransferase activity"/>
    <property type="evidence" value="ECO:0007669"/>
    <property type="project" value="UniProtKB-UniRule"/>
</dbReference>
<dbReference type="GO" id="GO:0016208">
    <property type="term" value="F:AMP binding"/>
    <property type="evidence" value="ECO:0007669"/>
    <property type="project" value="TreeGrafter"/>
</dbReference>
<dbReference type="GO" id="GO:0006168">
    <property type="term" value="P:adenine salvage"/>
    <property type="evidence" value="ECO:0007669"/>
    <property type="project" value="InterPro"/>
</dbReference>
<dbReference type="GO" id="GO:0044209">
    <property type="term" value="P:AMP salvage"/>
    <property type="evidence" value="ECO:0007669"/>
    <property type="project" value="UniProtKB-UniRule"/>
</dbReference>
<dbReference type="GO" id="GO:0006166">
    <property type="term" value="P:purine ribonucleoside salvage"/>
    <property type="evidence" value="ECO:0007669"/>
    <property type="project" value="UniProtKB-KW"/>
</dbReference>
<dbReference type="CDD" id="cd06223">
    <property type="entry name" value="PRTases_typeI"/>
    <property type="match status" value="1"/>
</dbReference>
<dbReference type="FunFam" id="3.40.50.2020:FF:000004">
    <property type="entry name" value="Adenine phosphoribosyltransferase"/>
    <property type="match status" value="1"/>
</dbReference>
<dbReference type="Gene3D" id="3.40.50.2020">
    <property type="match status" value="1"/>
</dbReference>
<dbReference type="HAMAP" id="MF_00004">
    <property type="entry name" value="Aden_phosphoribosyltr"/>
    <property type="match status" value="1"/>
</dbReference>
<dbReference type="InterPro" id="IPR005764">
    <property type="entry name" value="Ade_phspho_trans"/>
</dbReference>
<dbReference type="InterPro" id="IPR000836">
    <property type="entry name" value="PRibTrfase_dom"/>
</dbReference>
<dbReference type="InterPro" id="IPR029057">
    <property type="entry name" value="PRTase-like"/>
</dbReference>
<dbReference type="InterPro" id="IPR050054">
    <property type="entry name" value="UPRTase/APRTase"/>
</dbReference>
<dbReference type="NCBIfam" id="NF002636">
    <property type="entry name" value="PRK02304.1-5"/>
    <property type="match status" value="1"/>
</dbReference>
<dbReference type="PANTHER" id="PTHR32315">
    <property type="entry name" value="ADENINE PHOSPHORIBOSYLTRANSFERASE"/>
    <property type="match status" value="1"/>
</dbReference>
<dbReference type="PANTHER" id="PTHR32315:SF3">
    <property type="entry name" value="ADENINE PHOSPHORIBOSYLTRANSFERASE"/>
    <property type="match status" value="1"/>
</dbReference>
<dbReference type="Pfam" id="PF00156">
    <property type="entry name" value="Pribosyltran"/>
    <property type="match status" value="1"/>
</dbReference>
<dbReference type="SUPFAM" id="SSF53271">
    <property type="entry name" value="PRTase-like"/>
    <property type="match status" value="1"/>
</dbReference>
<dbReference type="PROSITE" id="PS00103">
    <property type="entry name" value="PUR_PYR_PR_TRANSFER"/>
    <property type="match status" value="1"/>
</dbReference>
<accession>B7J0M3</accession>